<feature type="chain" id="PRO_1000088601" description="Tyrosine--tRNA ligase">
    <location>
        <begin position="1"/>
        <end position="423"/>
    </location>
</feature>
<feature type="domain" description="S4 RNA-binding" evidence="1">
    <location>
        <begin position="355"/>
        <end position="412"/>
    </location>
</feature>
<feature type="short sequence motif" description="'HIGH' region">
    <location>
        <begin position="40"/>
        <end position="49"/>
    </location>
</feature>
<feature type="short sequence motif" description="'KMSKS' region">
    <location>
        <begin position="230"/>
        <end position="234"/>
    </location>
</feature>
<feature type="binding site" evidence="1">
    <location>
        <position position="35"/>
    </location>
    <ligand>
        <name>L-tyrosine</name>
        <dbReference type="ChEBI" id="CHEBI:58315"/>
    </ligand>
</feature>
<feature type="binding site" evidence="1">
    <location>
        <position position="170"/>
    </location>
    <ligand>
        <name>L-tyrosine</name>
        <dbReference type="ChEBI" id="CHEBI:58315"/>
    </ligand>
</feature>
<feature type="binding site" evidence="1">
    <location>
        <position position="174"/>
    </location>
    <ligand>
        <name>L-tyrosine</name>
        <dbReference type="ChEBI" id="CHEBI:58315"/>
    </ligand>
</feature>
<feature type="binding site" evidence="1">
    <location>
        <position position="233"/>
    </location>
    <ligand>
        <name>ATP</name>
        <dbReference type="ChEBI" id="CHEBI:30616"/>
    </ligand>
</feature>
<reference key="1">
    <citation type="submission" date="2007-02" db="EMBL/GenBank/DDBJ databases">
        <title>Complete sequence of Mycobacterium sp. JLS.</title>
        <authorList>
            <consortium name="US DOE Joint Genome Institute"/>
            <person name="Copeland A."/>
            <person name="Lucas S."/>
            <person name="Lapidus A."/>
            <person name="Barry K."/>
            <person name="Detter J.C."/>
            <person name="Glavina del Rio T."/>
            <person name="Hammon N."/>
            <person name="Israni S."/>
            <person name="Dalin E."/>
            <person name="Tice H."/>
            <person name="Pitluck S."/>
            <person name="Chain P."/>
            <person name="Malfatti S."/>
            <person name="Shin M."/>
            <person name="Vergez L."/>
            <person name="Schmutz J."/>
            <person name="Larimer F."/>
            <person name="Land M."/>
            <person name="Hauser L."/>
            <person name="Kyrpides N."/>
            <person name="Mikhailova N."/>
            <person name="Miller C.D."/>
            <person name="Anderson A.J."/>
            <person name="Sims R.C."/>
            <person name="Richardson P."/>
        </authorList>
    </citation>
    <scope>NUCLEOTIDE SEQUENCE [LARGE SCALE GENOMIC DNA]</scope>
    <source>
        <strain>JLS</strain>
    </source>
</reference>
<gene>
    <name evidence="1" type="primary">tyrS</name>
    <name type="ordered locus">Mjls_2970</name>
</gene>
<organism>
    <name type="scientific">Mycobacterium sp. (strain JLS)</name>
    <dbReference type="NCBI Taxonomy" id="164757"/>
    <lineage>
        <taxon>Bacteria</taxon>
        <taxon>Bacillati</taxon>
        <taxon>Actinomycetota</taxon>
        <taxon>Actinomycetes</taxon>
        <taxon>Mycobacteriales</taxon>
        <taxon>Mycobacteriaceae</taxon>
        <taxon>Mycobacterium</taxon>
    </lineage>
</organism>
<comment type="function">
    <text evidence="1">Catalyzes the attachment of tyrosine to tRNA(Tyr) in a two-step reaction: tyrosine is first activated by ATP to form Tyr-AMP and then transferred to the acceptor end of tRNA(Tyr).</text>
</comment>
<comment type="catalytic activity">
    <reaction evidence="1">
        <text>tRNA(Tyr) + L-tyrosine + ATP = L-tyrosyl-tRNA(Tyr) + AMP + diphosphate + H(+)</text>
        <dbReference type="Rhea" id="RHEA:10220"/>
        <dbReference type="Rhea" id="RHEA-COMP:9706"/>
        <dbReference type="Rhea" id="RHEA-COMP:9707"/>
        <dbReference type="ChEBI" id="CHEBI:15378"/>
        <dbReference type="ChEBI" id="CHEBI:30616"/>
        <dbReference type="ChEBI" id="CHEBI:33019"/>
        <dbReference type="ChEBI" id="CHEBI:58315"/>
        <dbReference type="ChEBI" id="CHEBI:78442"/>
        <dbReference type="ChEBI" id="CHEBI:78536"/>
        <dbReference type="ChEBI" id="CHEBI:456215"/>
        <dbReference type="EC" id="6.1.1.1"/>
    </reaction>
</comment>
<comment type="subunit">
    <text evidence="1">Homodimer.</text>
</comment>
<comment type="subcellular location">
    <subcellularLocation>
        <location evidence="1">Cytoplasm</location>
    </subcellularLocation>
</comment>
<comment type="similarity">
    <text evidence="1">Belongs to the class-I aminoacyl-tRNA synthetase family. TyrS type 1 subfamily.</text>
</comment>
<evidence type="ECO:0000255" key="1">
    <source>
        <dbReference type="HAMAP-Rule" id="MF_02006"/>
    </source>
</evidence>
<dbReference type="EC" id="6.1.1.1" evidence="1"/>
<dbReference type="EMBL" id="CP000580">
    <property type="protein sequence ID" value="ABN98749.1"/>
    <property type="molecule type" value="Genomic_DNA"/>
</dbReference>
<dbReference type="SMR" id="A3Q0S2"/>
<dbReference type="KEGG" id="mjl:Mjls_2970"/>
<dbReference type="HOGENOM" id="CLU_024003_0_2_11"/>
<dbReference type="BioCyc" id="MSP164757:G1G8C-2993-MONOMER"/>
<dbReference type="GO" id="GO:0005829">
    <property type="term" value="C:cytosol"/>
    <property type="evidence" value="ECO:0007669"/>
    <property type="project" value="TreeGrafter"/>
</dbReference>
<dbReference type="GO" id="GO:0005524">
    <property type="term" value="F:ATP binding"/>
    <property type="evidence" value="ECO:0007669"/>
    <property type="project" value="UniProtKB-UniRule"/>
</dbReference>
<dbReference type="GO" id="GO:0003723">
    <property type="term" value="F:RNA binding"/>
    <property type="evidence" value="ECO:0007669"/>
    <property type="project" value="UniProtKB-KW"/>
</dbReference>
<dbReference type="GO" id="GO:0004831">
    <property type="term" value="F:tyrosine-tRNA ligase activity"/>
    <property type="evidence" value="ECO:0007669"/>
    <property type="project" value="UniProtKB-UniRule"/>
</dbReference>
<dbReference type="GO" id="GO:0006437">
    <property type="term" value="P:tyrosyl-tRNA aminoacylation"/>
    <property type="evidence" value="ECO:0007669"/>
    <property type="project" value="UniProtKB-UniRule"/>
</dbReference>
<dbReference type="CDD" id="cd00165">
    <property type="entry name" value="S4"/>
    <property type="match status" value="1"/>
</dbReference>
<dbReference type="CDD" id="cd00805">
    <property type="entry name" value="TyrRS_core"/>
    <property type="match status" value="1"/>
</dbReference>
<dbReference type="FunFam" id="1.10.240.10:FF:000001">
    <property type="entry name" value="Tyrosine--tRNA ligase"/>
    <property type="match status" value="1"/>
</dbReference>
<dbReference type="FunFam" id="3.10.290.10:FF:000014">
    <property type="entry name" value="Tyrosine--tRNA ligase"/>
    <property type="match status" value="1"/>
</dbReference>
<dbReference type="FunFam" id="3.40.50.620:FF:000008">
    <property type="entry name" value="Tyrosine--tRNA ligase"/>
    <property type="match status" value="1"/>
</dbReference>
<dbReference type="Gene3D" id="3.40.50.620">
    <property type="entry name" value="HUPs"/>
    <property type="match status" value="1"/>
</dbReference>
<dbReference type="Gene3D" id="3.10.290.10">
    <property type="entry name" value="RNA-binding S4 domain"/>
    <property type="match status" value="1"/>
</dbReference>
<dbReference type="Gene3D" id="1.10.240.10">
    <property type="entry name" value="Tyrosyl-Transfer RNA Synthetase"/>
    <property type="match status" value="1"/>
</dbReference>
<dbReference type="HAMAP" id="MF_02006">
    <property type="entry name" value="Tyr_tRNA_synth_type1"/>
    <property type="match status" value="1"/>
</dbReference>
<dbReference type="InterPro" id="IPR001412">
    <property type="entry name" value="aa-tRNA-synth_I_CS"/>
</dbReference>
<dbReference type="InterPro" id="IPR002305">
    <property type="entry name" value="aa-tRNA-synth_Ic"/>
</dbReference>
<dbReference type="InterPro" id="IPR014729">
    <property type="entry name" value="Rossmann-like_a/b/a_fold"/>
</dbReference>
<dbReference type="InterPro" id="IPR002942">
    <property type="entry name" value="S4_RNA-bd"/>
</dbReference>
<dbReference type="InterPro" id="IPR036986">
    <property type="entry name" value="S4_RNA-bd_sf"/>
</dbReference>
<dbReference type="InterPro" id="IPR054608">
    <property type="entry name" value="SYY-like_C"/>
</dbReference>
<dbReference type="InterPro" id="IPR002307">
    <property type="entry name" value="Tyr-tRNA-ligase"/>
</dbReference>
<dbReference type="InterPro" id="IPR024088">
    <property type="entry name" value="Tyr-tRNA-ligase_bac-type"/>
</dbReference>
<dbReference type="InterPro" id="IPR024107">
    <property type="entry name" value="Tyr-tRNA-ligase_bac_1"/>
</dbReference>
<dbReference type="NCBIfam" id="TIGR00234">
    <property type="entry name" value="tyrS"/>
    <property type="match status" value="1"/>
</dbReference>
<dbReference type="PANTHER" id="PTHR11766:SF0">
    <property type="entry name" value="TYROSINE--TRNA LIGASE, MITOCHONDRIAL"/>
    <property type="match status" value="1"/>
</dbReference>
<dbReference type="PANTHER" id="PTHR11766">
    <property type="entry name" value="TYROSYL-TRNA SYNTHETASE"/>
    <property type="match status" value="1"/>
</dbReference>
<dbReference type="Pfam" id="PF22421">
    <property type="entry name" value="SYY_C-terminal"/>
    <property type="match status" value="1"/>
</dbReference>
<dbReference type="Pfam" id="PF00579">
    <property type="entry name" value="tRNA-synt_1b"/>
    <property type="match status" value="1"/>
</dbReference>
<dbReference type="PRINTS" id="PR01040">
    <property type="entry name" value="TRNASYNTHTYR"/>
</dbReference>
<dbReference type="SMART" id="SM00363">
    <property type="entry name" value="S4"/>
    <property type="match status" value="1"/>
</dbReference>
<dbReference type="SUPFAM" id="SSF55174">
    <property type="entry name" value="Alpha-L RNA-binding motif"/>
    <property type="match status" value="1"/>
</dbReference>
<dbReference type="SUPFAM" id="SSF52374">
    <property type="entry name" value="Nucleotidylyl transferase"/>
    <property type="match status" value="1"/>
</dbReference>
<dbReference type="PROSITE" id="PS00178">
    <property type="entry name" value="AA_TRNA_LIGASE_I"/>
    <property type="match status" value="1"/>
</dbReference>
<dbReference type="PROSITE" id="PS50889">
    <property type="entry name" value="S4"/>
    <property type="match status" value="1"/>
</dbReference>
<protein>
    <recommendedName>
        <fullName evidence="1">Tyrosine--tRNA ligase</fullName>
        <ecNumber evidence="1">6.1.1.1</ecNumber>
    </recommendedName>
    <alternativeName>
        <fullName evidence="1">Tyrosyl-tRNA synthetase</fullName>
        <shortName evidence="1">TyrRS</shortName>
    </alternativeName>
</protein>
<name>SYY_MYCSJ</name>
<sequence>MSSILDELDWRGLIAQSTDRDALAAELAAGPMTLYSGFDPTAPSLHAGHLVPLLTLRRFQQAGHRPIVLAGGATGMIGDPRDTGERTLQTADTVADWADRIRGQLERFVEFDESPTGAIVENNLSWTGALSTIEFLRDVGKYFSVNVMLDRDTVRRRLEGEGISYTEFSYMLLQANDYVQLRKRHGCALQIGGSDQWGNIVAGVRLVRQKLGDTVHAMTTPLVTDSEGKKFGKSTGGGNLWLDPEMTTPYAWYQYFINTADADVVNYLRWFTFLEAGELGELEEATRDRPHQRTAQRRLARELTTLVHGEDATRSVEHASQALFGRGELAALDEPTLAAALREASVAELTPSGPDLITDLLVATGLSASKGAARRTIAEGGVSVNNVKIDSDEWTPQASDFLHGRWLVLRRGKRNIAGVQRVR</sequence>
<proteinExistence type="inferred from homology"/>
<keyword id="KW-0030">Aminoacyl-tRNA synthetase</keyword>
<keyword id="KW-0067">ATP-binding</keyword>
<keyword id="KW-0963">Cytoplasm</keyword>
<keyword id="KW-0436">Ligase</keyword>
<keyword id="KW-0547">Nucleotide-binding</keyword>
<keyword id="KW-0648">Protein biosynthesis</keyword>
<keyword id="KW-0694">RNA-binding</keyword>
<accession>A3Q0S2</accession>